<comment type="function">
    <text evidence="1">Catalyzes the formation of acetyl phosphate from acetate and ATP. Can also catalyze the reverse reaction.</text>
</comment>
<comment type="catalytic activity">
    <reaction evidence="1">
        <text>acetate + ATP = acetyl phosphate + ADP</text>
        <dbReference type="Rhea" id="RHEA:11352"/>
        <dbReference type="ChEBI" id="CHEBI:22191"/>
        <dbReference type="ChEBI" id="CHEBI:30089"/>
        <dbReference type="ChEBI" id="CHEBI:30616"/>
        <dbReference type="ChEBI" id="CHEBI:456216"/>
        <dbReference type="EC" id="2.7.2.1"/>
    </reaction>
</comment>
<comment type="cofactor">
    <cofactor evidence="1">
        <name>Mg(2+)</name>
        <dbReference type="ChEBI" id="CHEBI:18420"/>
    </cofactor>
    <cofactor evidence="1">
        <name>Mn(2+)</name>
        <dbReference type="ChEBI" id="CHEBI:29035"/>
    </cofactor>
    <text evidence="1">Mg(2+). Can also accept Mn(2+).</text>
</comment>
<comment type="pathway">
    <text evidence="1">Metabolic intermediate biosynthesis; acetyl-CoA biosynthesis; acetyl-CoA from acetate: step 1/2.</text>
</comment>
<comment type="subunit">
    <text evidence="1">Homodimer.</text>
</comment>
<comment type="subcellular location">
    <subcellularLocation>
        <location evidence="1">Cytoplasm</location>
    </subcellularLocation>
</comment>
<comment type="similarity">
    <text evidence="1">Belongs to the acetokinase family.</text>
</comment>
<accession>C0QWN8</accession>
<name>ACKA_BRAHW</name>
<feature type="chain" id="PRO_1000116794" description="Acetate kinase">
    <location>
        <begin position="1"/>
        <end position="395"/>
    </location>
</feature>
<feature type="active site" description="Proton donor/acceptor" evidence="1">
    <location>
        <position position="149"/>
    </location>
</feature>
<feature type="binding site" evidence="1">
    <location>
        <position position="7"/>
    </location>
    <ligand>
        <name>Mg(2+)</name>
        <dbReference type="ChEBI" id="CHEBI:18420"/>
    </ligand>
</feature>
<feature type="binding site" evidence="1">
    <location>
        <position position="14"/>
    </location>
    <ligand>
        <name>ATP</name>
        <dbReference type="ChEBI" id="CHEBI:30616"/>
    </ligand>
</feature>
<feature type="binding site" evidence="1">
    <location>
        <position position="92"/>
    </location>
    <ligand>
        <name>substrate</name>
    </ligand>
</feature>
<feature type="binding site" evidence="1">
    <location>
        <begin position="207"/>
        <end position="211"/>
    </location>
    <ligand>
        <name>ATP</name>
        <dbReference type="ChEBI" id="CHEBI:30616"/>
    </ligand>
</feature>
<feature type="binding site" evidence="1">
    <location>
        <begin position="282"/>
        <end position="284"/>
    </location>
    <ligand>
        <name>ATP</name>
        <dbReference type="ChEBI" id="CHEBI:30616"/>
    </ligand>
</feature>
<feature type="binding site" evidence="1">
    <location>
        <begin position="329"/>
        <end position="333"/>
    </location>
    <ligand>
        <name>ATP</name>
        <dbReference type="ChEBI" id="CHEBI:30616"/>
    </ligand>
</feature>
<feature type="binding site" evidence="1">
    <location>
        <position position="382"/>
    </location>
    <ligand>
        <name>Mg(2+)</name>
        <dbReference type="ChEBI" id="CHEBI:18420"/>
    </ligand>
</feature>
<feature type="site" description="Transition state stabilizer" evidence="1">
    <location>
        <position position="181"/>
    </location>
</feature>
<feature type="site" description="Transition state stabilizer" evidence="1">
    <location>
        <position position="240"/>
    </location>
</feature>
<proteinExistence type="inferred from homology"/>
<sequence>MNVLVINSGSSSIKYQLFAMPEAKVLAKGLLEKIGEEISALKHTAVEKGKEKKIEQKVADHKAGMSLIFSLLTDKEVGVIADMNEISAVGHRVVHGGEAFNKSILITDEAIKAIEACCDIAPLHNPAGLQGISACKEILKDVKMVGVFDTSFHQTIPDYAYMYAVPHEWYDKYKIRRYGFHGTSHKYVYGEFCKVTNKPNANVIVCHLGNGASVTAVKNGESIDTSMGLTPLEGLVMGTRSGDMDPAVPTFVMAKENLSAKEMDNILNKKSGLLGVSGVSNDMRNLEEAAKTNPKAELAITMFCYRVKKYIGAYMAALGHLDGIVFTGGIGENSAYIRGRILEGLDELGIKCDADKNSKARGCANFEKDGAAIKLYVIATDEEKAIAMDTYNLAK</sequence>
<organism>
    <name type="scientific">Brachyspira hyodysenteriae (strain ATCC 49526 / WA1)</name>
    <dbReference type="NCBI Taxonomy" id="565034"/>
    <lineage>
        <taxon>Bacteria</taxon>
        <taxon>Pseudomonadati</taxon>
        <taxon>Spirochaetota</taxon>
        <taxon>Spirochaetia</taxon>
        <taxon>Brachyspirales</taxon>
        <taxon>Brachyspiraceae</taxon>
        <taxon>Brachyspira</taxon>
    </lineage>
</organism>
<evidence type="ECO:0000255" key="1">
    <source>
        <dbReference type="HAMAP-Rule" id="MF_00020"/>
    </source>
</evidence>
<reference key="1">
    <citation type="journal article" date="2009" name="PLoS ONE">
        <title>Genome sequence of the pathogenic intestinal spirochete Brachyspira hyodysenteriae reveals adaptations to its lifestyle in the porcine large intestine.</title>
        <authorList>
            <person name="Bellgard M.I."/>
            <person name="Wanchanthuek P."/>
            <person name="La T."/>
            <person name="Ryan K."/>
            <person name="Moolhuijzen P."/>
            <person name="Albertyn Z."/>
            <person name="Shaban B."/>
            <person name="Motro Y."/>
            <person name="Dunn D.S."/>
            <person name="Schibeci D."/>
            <person name="Hunter A."/>
            <person name="Barrero R."/>
            <person name="Phillips N.D."/>
            <person name="Hampson D.J."/>
        </authorList>
    </citation>
    <scope>NUCLEOTIDE SEQUENCE [LARGE SCALE GENOMIC DNA]</scope>
    <source>
        <strain>ATCC 49526 / WA1</strain>
    </source>
</reference>
<keyword id="KW-0067">ATP-binding</keyword>
<keyword id="KW-0963">Cytoplasm</keyword>
<keyword id="KW-0418">Kinase</keyword>
<keyword id="KW-0460">Magnesium</keyword>
<keyword id="KW-0479">Metal-binding</keyword>
<keyword id="KW-0547">Nucleotide-binding</keyword>
<keyword id="KW-0808">Transferase</keyword>
<gene>
    <name evidence="1" type="primary">ackA</name>
    <name type="ordered locus">BHWA1_00180</name>
</gene>
<dbReference type="EC" id="2.7.2.1" evidence="1"/>
<dbReference type="EMBL" id="CP001357">
    <property type="protein sequence ID" value="ACN82680.1"/>
    <property type="molecule type" value="Genomic_DNA"/>
</dbReference>
<dbReference type="RefSeq" id="WP_012669733.1">
    <property type="nucleotide sequence ID" value="NC_012225.1"/>
</dbReference>
<dbReference type="SMR" id="C0QWN8"/>
<dbReference type="STRING" id="565034.BHWA1_00180"/>
<dbReference type="GeneID" id="63963972"/>
<dbReference type="KEGG" id="bhy:BHWA1_00180"/>
<dbReference type="eggNOG" id="COG0282">
    <property type="taxonomic scope" value="Bacteria"/>
</dbReference>
<dbReference type="HOGENOM" id="CLU_020352_0_1_12"/>
<dbReference type="UniPathway" id="UPA00340">
    <property type="reaction ID" value="UER00458"/>
</dbReference>
<dbReference type="Proteomes" id="UP000001803">
    <property type="component" value="Chromosome"/>
</dbReference>
<dbReference type="GO" id="GO:0005737">
    <property type="term" value="C:cytoplasm"/>
    <property type="evidence" value="ECO:0007669"/>
    <property type="project" value="UniProtKB-SubCell"/>
</dbReference>
<dbReference type="GO" id="GO:0008776">
    <property type="term" value="F:acetate kinase activity"/>
    <property type="evidence" value="ECO:0007669"/>
    <property type="project" value="UniProtKB-UniRule"/>
</dbReference>
<dbReference type="GO" id="GO:0005524">
    <property type="term" value="F:ATP binding"/>
    <property type="evidence" value="ECO:0007669"/>
    <property type="project" value="UniProtKB-KW"/>
</dbReference>
<dbReference type="GO" id="GO:0000287">
    <property type="term" value="F:magnesium ion binding"/>
    <property type="evidence" value="ECO:0007669"/>
    <property type="project" value="UniProtKB-UniRule"/>
</dbReference>
<dbReference type="GO" id="GO:0006083">
    <property type="term" value="P:acetate metabolic process"/>
    <property type="evidence" value="ECO:0007669"/>
    <property type="project" value="TreeGrafter"/>
</dbReference>
<dbReference type="GO" id="GO:0006085">
    <property type="term" value="P:acetyl-CoA biosynthetic process"/>
    <property type="evidence" value="ECO:0007669"/>
    <property type="project" value="UniProtKB-UniRule"/>
</dbReference>
<dbReference type="CDD" id="cd24010">
    <property type="entry name" value="ASKHA_NBD_AcK_PK"/>
    <property type="match status" value="1"/>
</dbReference>
<dbReference type="Gene3D" id="3.30.420.40">
    <property type="match status" value="2"/>
</dbReference>
<dbReference type="HAMAP" id="MF_00020">
    <property type="entry name" value="Acetate_kinase"/>
    <property type="match status" value="1"/>
</dbReference>
<dbReference type="InterPro" id="IPR004372">
    <property type="entry name" value="Ac/propionate_kinase"/>
</dbReference>
<dbReference type="InterPro" id="IPR000890">
    <property type="entry name" value="Aliphatic_acid_kin_short-chain"/>
</dbReference>
<dbReference type="InterPro" id="IPR023865">
    <property type="entry name" value="Aliphatic_acid_kinase_CS"/>
</dbReference>
<dbReference type="InterPro" id="IPR043129">
    <property type="entry name" value="ATPase_NBD"/>
</dbReference>
<dbReference type="NCBIfam" id="TIGR00016">
    <property type="entry name" value="ackA"/>
    <property type="match status" value="1"/>
</dbReference>
<dbReference type="PANTHER" id="PTHR21060">
    <property type="entry name" value="ACETATE KINASE"/>
    <property type="match status" value="1"/>
</dbReference>
<dbReference type="PANTHER" id="PTHR21060:SF15">
    <property type="entry name" value="ACETATE KINASE-RELATED"/>
    <property type="match status" value="1"/>
</dbReference>
<dbReference type="Pfam" id="PF00871">
    <property type="entry name" value="Acetate_kinase"/>
    <property type="match status" value="1"/>
</dbReference>
<dbReference type="PIRSF" id="PIRSF000722">
    <property type="entry name" value="Acetate_prop_kin"/>
    <property type="match status" value="1"/>
</dbReference>
<dbReference type="PRINTS" id="PR00471">
    <property type="entry name" value="ACETATEKNASE"/>
</dbReference>
<dbReference type="SUPFAM" id="SSF53067">
    <property type="entry name" value="Actin-like ATPase domain"/>
    <property type="match status" value="2"/>
</dbReference>
<dbReference type="PROSITE" id="PS01075">
    <property type="entry name" value="ACETATE_KINASE_1"/>
    <property type="match status" value="1"/>
</dbReference>
<dbReference type="PROSITE" id="PS01076">
    <property type="entry name" value="ACETATE_KINASE_2"/>
    <property type="match status" value="1"/>
</dbReference>
<protein>
    <recommendedName>
        <fullName evidence="1">Acetate kinase</fullName>
        <ecNumber evidence="1">2.7.2.1</ecNumber>
    </recommendedName>
    <alternativeName>
        <fullName evidence="1">Acetokinase</fullName>
    </alternativeName>
</protein>